<sequence>MPKMKTKSGAAKRFLKTANGIKHKHAFKSHILTKMSTKRKRQLRGSSLLHPSDVAKVERMLRLR</sequence>
<reference key="1">
    <citation type="journal article" date="2005" name="Proc. Natl. Acad. Sci. U.S.A.">
        <title>Comparison of the complete genome sequences of Pseudomonas syringae pv. syringae B728a and pv. tomato DC3000.</title>
        <authorList>
            <person name="Feil H."/>
            <person name="Feil W.S."/>
            <person name="Chain P."/>
            <person name="Larimer F."/>
            <person name="Dibartolo G."/>
            <person name="Copeland A."/>
            <person name="Lykidis A."/>
            <person name="Trong S."/>
            <person name="Nolan M."/>
            <person name="Goltsman E."/>
            <person name="Thiel J."/>
            <person name="Malfatti S."/>
            <person name="Loper J.E."/>
            <person name="Lapidus A."/>
            <person name="Detter J.C."/>
            <person name="Land M."/>
            <person name="Richardson P.M."/>
            <person name="Kyrpides N.C."/>
            <person name="Ivanova N."/>
            <person name="Lindow S.E."/>
        </authorList>
    </citation>
    <scope>NUCLEOTIDE SEQUENCE [LARGE SCALE GENOMIC DNA]</scope>
    <source>
        <strain>B728a</strain>
    </source>
</reference>
<proteinExistence type="inferred from homology"/>
<name>RL35_PSEU2</name>
<evidence type="ECO:0000255" key="1">
    <source>
        <dbReference type="HAMAP-Rule" id="MF_00514"/>
    </source>
</evidence>
<evidence type="ECO:0000305" key="2"/>
<accession>Q4ZUG5</accession>
<organism>
    <name type="scientific">Pseudomonas syringae pv. syringae (strain B728a)</name>
    <dbReference type="NCBI Taxonomy" id="205918"/>
    <lineage>
        <taxon>Bacteria</taxon>
        <taxon>Pseudomonadati</taxon>
        <taxon>Pseudomonadota</taxon>
        <taxon>Gammaproteobacteria</taxon>
        <taxon>Pseudomonadales</taxon>
        <taxon>Pseudomonadaceae</taxon>
        <taxon>Pseudomonas</taxon>
        <taxon>Pseudomonas syringae</taxon>
    </lineage>
</organism>
<protein>
    <recommendedName>
        <fullName evidence="1">Large ribosomal subunit protein bL35</fullName>
    </recommendedName>
    <alternativeName>
        <fullName evidence="2">50S ribosomal protein L35</fullName>
    </alternativeName>
</protein>
<feature type="chain" id="PRO_0000258729" description="Large ribosomal subunit protein bL35">
    <location>
        <begin position="1"/>
        <end position="64"/>
    </location>
</feature>
<comment type="similarity">
    <text evidence="1">Belongs to the bacterial ribosomal protein bL35 family.</text>
</comment>
<dbReference type="EMBL" id="CP000075">
    <property type="protein sequence ID" value="AAY37207.1"/>
    <property type="molecule type" value="Genomic_DNA"/>
</dbReference>
<dbReference type="RefSeq" id="WP_002553160.1">
    <property type="nucleotide sequence ID" value="NC_007005.1"/>
</dbReference>
<dbReference type="RefSeq" id="YP_235245.1">
    <property type="nucleotide sequence ID" value="NC_007005.1"/>
</dbReference>
<dbReference type="SMR" id="Q4ZUG5"/>
<dbReference type="STRING" id="205918.Psyr_2164"/>
<dbReference type="GeneID" id="98112259"/>
<dbReference type="KEGG" id="psb:Psyr_2164"/>
<dbReference type="PATRIC" id="fig|205918.7.peg.2214"/>
<dbReference type="eggNOG" id="COG0291">
    <property type="taxonomic scope" value="Bacteria"/>
</dbReference>
<dbReference type="HOGENOM" id="CLU_169643_1_1_6"/>
<dbReference type="OrthoDB" id="47476at2"/>
<dbReference type="PRO" id="PR:Q4ZUG5"/>
<dbReference type="Proteomes" id="UP000000426">
    <property type="component" value="Chromosome"/>
</dbReference>
<dbReference type="GO" id="GO:0022625">
    <property type="term" value="C:cytosolic large ribosomal subunit"/>
    <property type="evidence" value="ECO:0007669"/>
    <property type="project" value="TreeGrafter"/>
</dbReference>
<dbReference type="GO" id="GO:0003735">
    <property type="term" value="F:structural constituent of ribosome"/>
    <property type="evidence" value="ECO:0007669"/>
    <property type="project" value="InterPro"/>
</dbReference>
<dbReference type="GO" id="GO:0006412">
    <property type="term" value="P:translation"/>
    <property type="evidence" value="ECO:0007669"/>
    <property type="project" value="UniProtKB-UniRule"/>
</dbReference>
<dbReference type="FunFam" id="4.10.410.60:FF:000001">
    <property type="entry name" value="50S ribosomal protein L35"/>
    <property type="match status" value="1"/>
</dbReference>
<dbReference type="Gene3D" id="4.10.410.60">
    <property type="match status" value="1"/>
</dbReference>
<dbReference type="HAMAP" id="MF_00514">
    <property type="entry name" value="Ribosomal_bL35"/>
    <property type="match status" value="1"/>
</dbReference>
<dbReference type="InterPro" id="IPR001706">
    <property type="entry name" value="Ribosomal_bL35"/>
</dbReference>
<dbReference type="InterPro" id="IPR021137">
    <property type="entry name" value="Ribosomal_bL35-like"/>
</dbReference>
<dbReference type="InterPro" id="IPR018265">
    <property type="entry name" value="Ribosomal_bL35_CS"/>
</dbReference>
<dbReference type="InterPro" id="IPR037229">
    <property type="entry name" value="Ribosomal_bL35_sf"/>
</dbReference>
<dbReference type="NCBIfam" id="TIGR00001">
    <property type="entry name" value="rpmI_bact"/>
    <property type="match status" value="1"/>
</dbReference>
<dbReference type="PANTHER" id="PTHR33343">
    <property type="entry name" value="54S RIBOSOMAL PROTEIN BL35M"/>
    <property type="match status" value="1"/>
</dbReference>
<dbReference type="PANTHER" id="PTHR33343:SF1">
    <property type="entry name" value="LARGE RIBOSOMAL SUBUNIT PROTEIN BL35M"/>
    <property type="match status" value="1"/>
</dbReference>
<dbReference type="Pfam" id="PF01632">
    <property type="entry name" value="Ribosomal_L35p"/>
    <property type="match status" value="1"/>
</dbReference>
<dbReference type="PRINTS" id="PR00064">
    <property type="entry name" value="RIBOSOMALL35"/>
</dbReference>
<dbReference type="SUPFAM" id="SSF143034">
    <property type="entry name" value="L35p-like"/>
    <property type="match status" value="1"/>
</dbReference>
<dbReference type="PROSITE" id="PS00936">
    <property type="entry name" value="RIBOSOMAL_L35"/>
    <property type="match status" value="1"/>
</dbReference>
<keyword id="KW-0687">Ribonucleoprotein</keyword>
<keyword id="KW-0689">Ribosomal protein</keyword>
<gene>
    <name evidence="1" type="primary">rpmI</name>
    <name type="ordered locus">Psyr_2164</name>
</gene>